<sequence>MSKKHTTLNASIIDTRRPTVAGADRHPGWHALRKIAARITTPLLPDDYLHLANPLWSARELRGRILGVRRETEDSATLFIKPGWGFSFDYQPGQYIGIGLLVDGRWRWRSYSLTSSPAASGSARMVTVTVKAMPEGFLSTHLVAGVKPGTIVRLAAPQGNFVLPDPAPPLILFLTAGSGITPVMSMLRTLVRRNQITDVVHLHSAPTAADVMFGAELAALAADHPGYRLSVRETRAQGRLDLTRIGQQVPDWRERQTWACGPEGVLNQADKVWSSAGASDRLHLERFAVSKTAPAGAGGTVTFARSGKSVAADAATSLMDAGEGAGVQLPFGCRMGICQSCVVDLVEGHVRDLRTGQRHEPGTRVQTCVSAASGDCVLDI</sequence>
<evidence type="ECO:0000250" key="1">
    <source>
        <dbReference type="UniProtKB" id="P33164"/>
    </source>
</evidence>
<evidence type="ECO:0000255" key="2">
    <source>
        <dbReference type="PROSITE-ProRule" id="PRU00465"/>
    </source>
</evidence>
<evidence type="ECO:0000255" key="3">
    <source>
        <dbReference type="PROSITE-ProRule" id="PRU00716"/>
    </source>
</evidence>
<evidence type="ECO:0000269" key="4">
    <source>
    </source>
</evidence>
<evidence type="ECO:0000303" key="5">
    <source>
    </source>
</evidence>
<evidence type="ECO:0000305" key="6">
    <source>
    </source>
</evidence>
<organism>
    <name type="scientific">Mycobacterium tuberculosis (strain ATCC 25618 / H37Rv)</name>
    <dbReference type="NCBI Taxonomy" id="83332"/>
    <lineage>
        <taxon>Bacteria</taxon>
        <taxon>Bacillati</taxon>
        <taxon>Actinomycetota</taxon>
        <taxon>Actinomycetes</taxon>
        <taxon>Mycobacteriales</taxon>
        <taxon>Mycobacteriaceae</taxon>
        <taxon>Mycobacterium</taxon>
        <taxon>Mycobacterium tuberculosis complex</taxon>
    </lineage>
</organism>
<protein>
    <recommendedName>
        <fullName evidence="5">NADPH oxidoreductase</fullName>
        <ecNumber evidence="6">1.-.-.-</ecNumber>
    </recommendedName>
    <alternativeName>
        <fullName evidence="5">Stearoyl-CoA 9-desaturase electron transfer partner</fullName>
    </alternativeName>
</protein>
<dbReference type="EC" id="1.-.-.-" evidence="6"/>
<dbReference type="EMBL" id="AL123456">
    <property type="protein sequence ID" value="CCP46049.1"/>
    <property type="molecule type" value="Genomic_DNA"/>
</dbReference>
<dbReference type="PIR" id="H70590">
    <property type="entry name" value="H70590"/>
</dbReference>
<dbReference type="RefSeq" id="NP_217747.1">
    <property type="nucleotide sequence ID" value="NC_000962.3"/>
</dbReference>
<dbReference type="RefSeq" id="WP_003416922.1">
    <property type="nucleotide sequence ID" value="NZ_NVQJ01000003.1"/>
</dbReference>
<dbReference type="SMR" id="P9WNE9"/>
<dbReference type="FunCoup" id="P9WNE9">
    <property type="interactions" value="151"/>
</dbReference>
<dbReference type="STRING" id="83332.Rv3230c"/>
<dbReference type="PaxDb" id="83332-Rv3230c"/>
<dbReference type="DNASU" id="888748"/>
<dbReference type="GeneID" id="888748"/>
<dbReference type="KEGG" id="mtu:Rv3230c"/>
<dbReference type="KEGG" id="mtv:RVBD_3230c"/>
<dbReference type="TubercuList" id="Rv3230c"/>
<dbReference type="eggNOG" id="COG1018">
    <property type="taxonomic scope" value="Bacteria"/>
</dbReference>
<dbReference type="InParanoid" id="P9WNE9"/>
<dbReference type="OrthoDB" id="9796486at2"/>
<dbReference type="PhylomeDB" id="P9WNE9"/>
<dbReference type="BioCyc" id="MetaCyc:G185E-7504-MONOMER"/>
<dbReference type="UniPathway" id="UPA00199"/>
<dbReference type="Proteomes" id="UP000001584">
    <property type="component" value="Chromosome"/>
</dbReference>
<dbReference type="GO" id="GO:0005886">
    <property type="term" value="C:plasma membrane"/>
    <property type="evidence" value="ECO:0007669"/>
    <property type="project" value="UniProtKB-SubCell"/>
</dbReference>
<dbReference type="GO" id="GO:0051537">
    <property type="term" value="F:2 iron, 2 sulfur cluster binding"/>
    <property type="evidence" value="ECO:0007669"/>
    <property type="project" value="UniProtKB-KW"/>
</dbReference>
<dbReference type="GO" id="GO:0009055">
    <property type="term" value="F:electron transfer activity"/>
    <property type="evidence" value="ECO:0000314"/>
    <property type="project" value="MTBBASE"/>
</dbReference>
<dbReference type="GO" id="GO:0046872">
    <property type="term" value="F:metal ion binding"/>
    <property type="evidence" value="ECO:0007669"/>
    <property type="project" value="UniProtKB-KW"/>
</dbReference>
<dbReference type="GO" id="GO:0070402">
    <property type="term" value="F:NADPH binding"/>
    <property type="evidence" value="ECO:0000314"/>
    <property type="project" value="MTBBASE"/>
</dbReference>
<dbReference type="GO" id="GO:0016491">
    <property type="term" value="F:oxidoreductase activity"/>
    <property type="evidence" value="ECO:0000318"/>
    <property type="project" value="GO_Central"/>
</dbReference>
<dbReference type="GO" id="GO:0022900">
    <property type="term" value="P:electron transport chain"/>
    <property type="evidence" value="ECO:0000314"/>
    <property type="project" value="MTBBASE"/>
</dbReference>
<dbReference type="GO" id="GO:0006631">
    <property type="term" value="P:fatty acid metabolic process"/>
    <property type="evidence" value="ECO:0007669"/>
    <property type="project" value="UniProtKB-UniPathway"/>
</dbReference>
<dbReference type="CDD" id="cd00207">
    <property type="entry name" value="fer2"/>
    <property type="match status" value="1"/>
</dbReference>
<dbReference type="CDD" id="cd06216">
    <property type="entry name" value="FNR_iron_sulfur_binding_2"/>
    <property type="match status" value="1"/>
</dbReference>
<dbReference type="FunFam" id="2.40.30.10:FF:000205">
    <property type="entry name" value="NADPH oxidoreductase"/>
    <property type="match status" value="1"/>
</dbReference>
<dbReference type="FunFam" id="3.10.20.30:FF:000032">
    <property type="entry name" value="Stearoyl-CoA 9-desaturase"/>
    <property type="match status" value="1"/>
</dbReference>
<dbReference type="Gene3D" id="3.10.20.30">
    <property type="match status" value="1"/>
</dbReference>
<dbReference type="Gene3D" id="3.40.50.80">
    <property type="entry name" value="Nucleotide-binding domain of ferredoxin-NADP reductase (FNR) module"/>
    <property type="match status" value="1"/>
</dbReference>
<dbReference type="Gene3D" id="2.40.30.10">
    <property type="entry name" value="Translation factors"/>
    <property type="match status" value="1"/>
</dbReference>
<dbReference type="InterPro" id="IPR036010">
    <property type="entry name" value="2Fe-2S_ferredoxin-like_sf"/>
</dbReference>
<dbReference type="InterPro" id="IPR001041">
    <property type="entry name" value="2Fe-2S_ferredoxin-type"/>
</dbReference>
<dbReference type="InterPro" id="IPR012675">
    <property type="entry name" value="Beta-grasp_dom_sf"/>
</dbReference>
<dbReference type="InterPro" id="IPR008333">
    <property type="entry name" value="Cbr1-like_FAD-bd_dom"/>
</dbReference>
<dbReference type="InterPro" id="IPR017927">
    <property type="entry name" value="FAD-bd_FR_type"/>
</dbReference>
<dbReference type="InterPro" id="IPR001709">
    <property type="entry name" value="Flavoprot_Pyr_Nucl_cyt_Rdtase"/>
</dbReference>
<dbReference type="InterPro" id="IPR039261">
    <property type="entry name" value="FNR_nucleotide-bd"/>
</dbReference>
<dbReference type="InterPro" id="IPR050415">
    <property type="entry name" value="MRET"/>
</dbReference>
<dbReference type="InterPro" id="IPR001433">
    <property type="entry name" value="OxRdtase_FAD/NAD-bd"/>
</dbReference>
<dbReference type="InterPro" id="IPR017938">
    <property type="entry name" value="Riboflavin_synthase-like_b-brl"/>
</dbReference>
<dbReference type="PANTHER" id="PTHR47354">
    <property type="entry name" value="NADH OXIDOREDUCTASE HCR"/>
    <property type="match status" value="1"/>
</dbReference>
<dbReference type="PANTHER" id="PTHR47354:SF6">
    <property type="entry name" value="NADH OXIDOREDUCTASE HCR"/>
    <property type="match status" value="1"/>
</dbReference>
<dbReference type="Pfam" id="PF00970">
    <property type="entry name" value="FAD_binding_6"/>
    <property type="match status" value="1"/>
</dbReference>
<dbReference type="Pfam" id="PF00111">
    <property type="entry name" value="Fer2"/>
    <property type="match status" value="1"/>
</dbReference>
<dbReference type="Pfam" id="PF00175">
    <property type="entry name" value="NAD_binding_1"/>
    <property type="match status" value="1"/>
</dbReference>
<dbReference type="PRINTS" id="PR00371">
    <property type="entry name" value="FPNCR"/>
</dbReference>
<dbReference type="PRINTS" id="PR00410">
    <property type="entry name" value="PHEHYDRXLASE"/>
</dbReference>
<dbReference type="SUPFAM" id="SSF54292">
    <property type="entry name" value="2Fe-2S ferredoxin-like"/>
    <property type="match status" value="1"/>
</dbReference>
<dbReference type="SUPFAM" id="SSF52343">
    <property type="entry name" value="Ferredoxin reductase-like, C-terminal NADP-linked domain"/>
    <property type="match status" value="1"/>
</dbReference>
<dbReference type="SUPFAM" id="SSF63380">
    <property type="entry name" value="Riboflavin synthase domain-like"/>
    <property type="match status" value="1"/>
</dbReference>
<dbReference type="PROSITE" id="PS51085">
    <property type="entry name" value="2FE2S_FER_2"/>
    <property type="match status" value="1"/>
</dbReference>
<dbReference type="PROSITE" id="PS51384">
    <property type="entry name" value="FAD_FR"/>
    <property type="match status" value="1"/>
</dbReference>
<comment type="function">
    <text evidence="4">Is likely involved in the aerobic desaturation system responsible for the synthesis of oleic acid from stearoyl-CoA; oleic acid is a precursor of mycobacterial membrane phospholipids and triglycerides. Is the electron transfer partner for the stearoyl-CoA 9-desaturase DesA3. Catalyzes electron transfer reaction between NADPH and the diiron center of DesA3. Cannot use NADH.</text>
</comment>
<comment type="cofactor">
    <cofactor evidence="1">
        <name>[2Fe-2S] cluster</name>
        <dbReference type="ChEBI" id="CHEBI:190135"/>
    </cofactor>
    <text evidence="1">Binds 1 [2Fe-2S] cluster.</text>
</comment>
<comment type="cofactor">
    <cofactor evidence="4">
        <name>FAD</name>
        <dbReference type="ChEBI" id="CHEBI:57692"/>
    </cofactor>
</comment>
<comment type="pathway">
    <text evidence="4">Lipid metabolism; fatty acid metabolism.</text>
</comment>
<comment type="subunit">
    <text evidence="4">Interacts with DesA3 to form a functional acyl-CoA desaturase complex.</text>
</comment>
<comment type="subcellular location">
    <subcellularLocation>
        <location>Cell membrane</location>
        <topology>Peripheral membrane protein</topology>
        <orientation evidence="6">Cytoplasmic side</orientation>
    </subcellularLocation>
</comment>
<feature type="chain" id="PRO_0000392678" description="NADPH oxidoreductase">
    <location>
        <begin position="1"/>
        <end position="380"/>
    </location>
</feature>
<feature type="domain" description="FAD-binding FR-type" evidence="3">
    <location>
        <begin position="58"/>
        <end position="164"/>
    </location>
</feature>
<feature type="domain" description="2Fe-2S ferredoxin-type" evidence="2">
    <location>
        <begin position="299"/>
        <end position="380"/>
    </location>
</feature>
<feature type="binding site" evidence="1 2">
    <location>
        <position position="333"/>
    </location>
    <ligand>
        <name>[2Fe-2S] cluster</name>
        <dbReference type="ChEBI" id="CHEBI:190135"/>
    </ligand>
</feature>
<feature type="binding site" evidence="1 2">
    <location>
        <position position="338"/>
    </location>
    <ligand>
        <name>[2Fe-2S] cluster</name>
        <dbReference type="ChEBI" id="CHEBI:190135"/>
    </ligand>
</feature>
<feature type="binding site" evidence="1 2">
    <location>
        <position position="341"/>
    </location>
    <ligand>
        <name>[2Fe-2S] cluster</name>
        <dbReference type="ChEBI" id="CHEBI:190135"/>
    </ligand>
</feature>
<feature type="binding site" evidence="1 2">
    <location>
        <position position="368"/>
    </location>
    <ligand>
        <name>[2Fe-2S] cluster</name>
        <dbReference type="ChEBI" id="CHEBI:190135"/>
    </ligand>
</feature>
<reference key="1">
    <citation type="journal article" date="1998" name="Nature">
        <title>Deciphering the biology of Mycobacterium tuberculosis from the complete genome sequence.</title>
        <authorList>
            <person name="Cole S.T."/>
            <person name="Brosch R."/>
            <person name="Parkhill J."/>
            <person name="Garnier T."/>
            <person name="Churcher C.M."/>
            <person name="Harris D.E."/>
            <person name="Gordon S.V."/>
            <person name="Eiglmeier K."/>
            <person name="Gas S."/>
            <person name="Barry C.E. III"/>
            <person name="Tekaia F."/>
            <person name="Badcock K."/>
            <person name="Basham D."/>
            <person name="Brown D."/>
            <person name="Chillingworth T."/>
            <person name="Connor R."/>
            <person name="Davies R.M."/>
            <person name="Devlin K."/>
            <person name="Feltwell T."/>
            <person name="Gentles S."/>
            <person name="Hamlin N."/>
            <person name="Holroyd S."/>
            <person name="Hornsby T."/>
            <person name="Jagels K."/>
            <person name="Krogh A."/>
            <person name="McLean J."/>
            <person name="Moule S."/>
            <person name="Murphy L.D."/>
            <person name="Oliver S."/>
            <person name="Osborne J."/>
            <person name="Quail M.A."/>
            <person name="Rajandream M.A."/>
            <person name="Rogers J."/>
            <person name="Rutter S."/>
            <person name="Seeger K."/>
            <person name="Skelton S."/>
            <person name="Squares S."/>
            <person name="Squares R."/>
            <person name="Sulston J.E."/>
            <person name="Taylor K."/>
            <person name="Whitehead S."/>
            <person name="Barrell B.G."/>
        </authorList>
    </citation>
    <scope>NUCLEOTIDE SEQUENCE [LARGE SCALE GENOMIC DNA]</scope>
    <source>
        <strain>ATCC 25618 / H37Rv</strain>
    </source>
</reference>
<reference key="2">
    <citation type="journal article" date="2006" name="Biochemistry">
        <title>Identification of Rv3230c as the NADPH oxidoreductase of a two-protein DesA3 acyl-CoA desaturase in Mycobacterium tuberculosis H37Rv.</title>
        <authorList>
            <person name="Chang Y."/>
            <person name="Fox B.G."/>
        </authorList>
    </citation>
    <scope>FUNCTION AS AN ELECTRON TRANSFER PARTNER</scope>
    <scope>INTERACTION WITH DESA3</scope>
    <scope>COFACTOR</scope>
    <scope>SUBCELLULAR LOCATION</scope>
    <scope>SUBUNIT</scope>
    <scope>PATHWAY</scope>
    <source>
        <strain>H37Rv</strain>
    </source>
</reference>
<reference key="3">
    <citation type="journal article" date="2011" name="Mol. Cell. Proteomics">
        <title>Proteogenomic analysis of Mycobacterium tuberculosis by high resolution mass spectrometry.</title>
        <authorList>
            <person name="Kelkar D.S."/>
            <person name="Kumar D."/>
            <person name="Kumar P."/>
            <person name="Balakrishnan L."/>
            <person name="Muthusamy B."/>
            <person name="Yadav A.K."/>
            <person name="Shrivastava P."/>
            <person name="Marimuthu A."/>
            <person name="Anand S."/>
            <person name="Sundaram H."/>
            <person name="Kingsbury R."/>
            <person name="Harsha H.C."/>
            <person name="Nair B."/>
            <person name="Prasad T.S."/>
            <person name="Chauhan D.S."/>
            <person name="Katoch K."/>
            <person name="Katoch V.M."/>
            <person name="Kumar P."/>
            <person name="Chaerkady R."/>
            <person name="Ramachandran S."/>
            <person name="Dash D."/>
            <person name="Pandey A."/>
        </authorList>
    </citation>
    <scope>IDENTIFICATION BY MASS SPECTROMETRY [LARGE SCALE ANALYSIS]</scope>
    <source>
        <strain>ATCC 25618 / H37Rv</strain>
    </source>
</reference>
<gene>
    <name type="ordered locus">Rv3230c</name>
</gene>
<accession>P9WNE9</accession>
<accession>L0TF04</accession>
<accession>O05875</accession>
<accession>Q7D5W0</accession>
<proteinExistence type="evidence at protein level"/>
<name>DESET_MYCTU</name>
<keyword id="KW-0001">2Fe-2S</keyword>
<keyword id="KW-1003">Cell membrane</keyword>
<keyword id="KW-0249">Electron transport</keyword>
<keyword id="KW-0274">FAD</keyword>
<keyword id="KW-0285">Flavoprotein</keyword>
<keyword id="KW-0408">Iron</keyword>
<keyword id="KW-0411">Iron-sulfur</keyword>
<keyword id="KW-0472">Membrane</keyword>
<keyword id="KW-0479">Metal-binding</keyword>
<keyword id="KW-0520">NAD</keyword>
<keyword id="KW-0560">Oxidoreductase</keyword>
<keyword id="KW-1185">Reference proteome</keyword>
<keyword id="KW-0813">Transport</keyword>